<dbReference type="EC" id="3.5.1.88" evidence="1"/>
<dbReference type="EMBL" id="AL513382">
    <property type="protein sequence ID" value="CAD09179.1"/>
    <property type="molecule type" value="Genomic_DNA"/>
</dbReference>
<dbReference type="EMBL" id="AE014613">
    <property type="protein sequence ID" value="AAO71565.1"/>
    <property type="molecule type" value="Genomic_DNA"/>
</dbReference>
<dbReference type="RefSeq" id="NP_458493.1">
    <property type="nucleotide sequence ID" value="NC_003198.1"/>
</dbReference>
<dbReference type="RefSeq" id="WP_000114992.1">
    <property type="nucleotide sequence ID" value="NZ_WSUR01000046.1"/>
</dbReference>
<dbReference type="SMR" id="Q8Z1W9"/>
<dbReference type="STRING" id="220341.gene:17588219"/>
<dbReference type="KEGG" id="stt:t4098"/>
<dbReference type="KEGG" id="sty:STY4391"/>
<dbReference type="PATRIC" id="fig|220341.7.peg.4487"/>
<dbReference type="eggNOG" id="COG0242">
    <property type="taxonomic scope" value="Bacteria"/>
</dbReference>
<dbReference type="HOGENOM" id="CLU_061901_2_1_6"/>
<dbReference type="OMA" id="VCIQHEI"/>
<dbReference type="OrthoDB" id="9804313at2"/>
<dbReference type="Proteomes" id="UP000000541">
    <property type="component" value="Chromosome"/>
</dbReference>
<dbReference type="Proteomes" id="UP000002670">
    <property type="component" value="Chromosome"/>
</dbReference>
<dbReference type="GO" id="GO:0046872">
    <property type="term" value="F:metal ion binding"/>
    <property type="evidence" value="ECO:0007669"/>
    <property type="project" value="UniProtKB-KW"/>
</dbReference>
<dbReference type="GO" id="GO:0042586">
    <property type="term" value="F:peptide deformylase activity"/>
    <property type="evidence" value="ECO:0007669"/>
    <property type="project" value="UniProtKB-UniRule"/>
</dbReference>
<dbReference type="GO" id="GO:0043686">
    <property type="term" value="P:co-translational protein modification"/>
    <property type="evidence" value="ECO:0007669"/>
    <property type="project" value="TreeGrafter"/>
</dbReference>
<dbReference type="GO" id="GO:0006412">
    <property type="term" value="P:translation"/>
    <property type="evidence" value="ECO:0007669"/>
    <property type="project" value="UniProtKB-UniRule"/>
</dbReference>
<dbReference type="CDD" id="cd00487">
    <property type="entry name" value="Pep_deformylase"/>
    <property type="match status" value="1"/>
</dbReference>
<dbReference type="FunFam" id="3.90.45.10:FF:000001">
    <property type="entry name" value="Peptide deformylase"/>
    <property type="match status" value="1"/>
</dbReference>
<dbReference type="Gene3D" id="3.90.45.10">
    <property type="entry name" value="Peptide deformylase"/>
    <property type="match status" value="1"/>
</dbReference>
<dbReference type="HAMAP" id="MF_00163">
    <property type="entry name" value="Pep_deformylase"/>
    <property type="match status" value="1"/>
</dbReference>
<dbReference type="InterPro" id="IPR023635">
    <property type="entry name" value="Peptide_deformylase"/>
</dbReference>
<dbReference type="InterPro" id="IPR036821">
    <property type="entry name" value="Peptide_deformylase_sf"/>
</dbReference>
<dbReference type="NCBIfam" id="TIGR00079">
    <property type="entry name" value="pept_deformyl"/>
    <property type="match status" value="1"/>
</dbReference>
<dbReference type="NCBIfam" id="NF001159">
    <property type="entry name" value="PRK00150.1-3"/>
    <property type="match status" value="1"/>
</dbReference>
<dbReference type="PANTHER" id="PTHR10458">
    <property type="entry name" value="PEPTIDE DEFORMYLASE"/>
    <property type="match status" value="1"/>
</dbReference>
<dbReference type="PANTHER" id="PTHR10458:SF21">
    <property type="entry name" value="PEPTIDE DEFORMYLASE"/>
    <property type="match status" value="1"/>
</dbReference>
<dbReference type="Pfam" id="PF01327">
    <property type="entry name" value="Pep_deformylase"/>
    <property type="match status" value="1"/>
</dbReference>
<dbReference type="PIRSF" id="PIRSF004749">
    <property type="entry name" value="Pep_def"/>
    <property type="match status" value="1"/>
</dbReference>
<dbReference type="PRINTS" id="PR01576">
    <property type="entry name" value="PDEFORMYLASE"/>
</dbReference>
<dbReference type="SUPFAM" id="SSF56420">
    <property type="entry name" value="Peptide deformylase"/>
    <property type="match status" value="1"/>
</dbReference>
<comment type="function">
    <text evidence="1">Removes the formyl group from the N-terminal Met of newly synthesized proteins. Requires at least a dipeptide for an efficient rate of reaction. N-terminal L-methionine is a prerequisite for activity but the enzyme has broad specificity at other positions.</text>
</comment>
<comment type="catalytic activity">
    <reaction evidence="1">
        <text>N-terminal N-formyl-L-methionyl-[peptide] + H2O = N-terminal L-methionyl-[peptide] + formate</text>
        <dbReference type="Rhea" id="RHEA:24420"/>
        <dbReference type="Rhea" id="RHEA-COMP:10639"/>
        <dbReference type="Rhea" id="RHEA-COMP:10640"/>
        <dbReference type="ChEBI" id="CHEBI:15377"/>
        <dbReference type="ChEBI" id="CHEBI:15740"/>
        <dbReference type="ChEBI" id="CHEBI:49298"/>
        <dbReference type="ChEBI" id="CHEBI:64731"/>
        <dbReference type="EC" id="3.5.1.88"/>
    </reaction>
</comment>
<comment type="cofactor">
    <cofactor evidence="1">
        <name>Fe(2+)</name>
        <dbReference type="ChEBI" id="CHEBI:29033"/>
    </cofactor>
    <text evidence="1">Binds 1 Fe(2+) ion.</text>
</comment>
<comment type="similarity">
    <text evidence="1">Belongs to the polypeptide deformylase family.</text>
</comment>
<feature type="chain" id="PRO_0000082832" description="Peptide deformylase">
    <location>
        <begin position="1"/>
        <end position="169"/>
    </location>
</feature>
<feature type="active site" evidence="1">
    <location>
        <position position="134"/>
    </location>
</feature>
<feature type="binding site" evidence="1">
    <location>
        <position position="91"/>
    </location>
    <ligand>
        <name>Fe cation</name>
        <dbReference type="ChEBI" id="CHEBI:24875"/>
    </ligand>
</feature>
<feature type="binding site" evidence="1">
    <location>
        <position position="133"/>
    </location>
    <ligand>
        <name>Fe cation</name>
        <dbReference type="ChEBI" id="CHEBI:24875"/>
    </ligand>
</feature>
<feature type="binding site" evidence="1">
    <location>
        <position position="137"/>
    </location>
    <ligand>
        <name>Fe cation</name>
        <dbReference type="ChEBI" id="CHEBI:24875"/>
    </ligand>
</feature>
<proteinExistence type="inferred from homology"/>
<name>DEF_SALTI</name>
<gene>
    <name evidence="1" type="primary">def</name>
    <name type="synonym">fms</name>
    <name type="ordered locus">STY4391</name>
    <name type="ordered locus">t4098</name>
</gene>
<protein>
    <recommendedName>
        <fullName evidence="1">Peptide deformylase</fullName>
        <shortName evidence="1">PDF</shortName>
        <ecNumber evidence="1">3.5.1.88</ecNumber>
    </recommendedName>
    <alternativeName>
        <fullName evidence="1">Polypeptide deformylase</fullName>
    </alternativeName>
</protein>
<organism>
    <name type="scientific">Salmonella typhi</name>
    <dbReference type="NCBI Taxonomy" id="90370"/>
    <lineage>
        <taxon>Bacteria</taxon>
        <taxon>Pseudomonadati</taxon>
        <taxon>Pseudomonadota</taxon>
        <taxon>Gammaproteobacteria</taxon>
        <taxon>Enterobacterales</taxon>
        <taxon>Enterobacteriaceae</taxon>
        <taxon>Salmonella</taxon>
    </lineage>
</organism>
<keyword id="KW-0378">Hydrolase</keyword>
<keyword id="KW-0408">Iron</keyword>
<keyword id="KW-0479">Metal-binding</keyword>
<keyword id="KW-0648">Protein biosynthesis</keyword>
<evidence type="ECO:0000255" key="1">
    <source>
        <dbReference type="HAMAP-Rule" id="MF_00163"/>
    </source>
</evidence>
<accession>Q8Z1W9</accession>
<reference key="1">
    <citation type="journal article" date="2001" name="Nature">
        <title>Complete genome sequence of a multiple drug resistant Salmonella enterica serovar Typhi CT18.</title>
        <authorList>
            <person name="Parkhill J."/>
            <person name="Dougan G."/>
            <person name="James K.D."/>
            <person name="Thomson N.R."/>
            <person name="Pickard D."/>
            <person name="Wain J."/>
            <person name="Churcher C.M."/>
            <person name="Mungall K.L."/>
            <person name="Bentley S.D."/>
            <person name="Holden M.T.G."/>
            <person name="Sebaihia M."/>
            <person name="Baker S."/>
            <person name="Basham D."/>
            <person name="Brooks K."/>
            <person name="Chillingworth T."/>
            <person name="Connerton P."/>
            <person name="Cronin A."/>
            <person name="Davis P."/>
            <person name="Davies R.M."/>
            <person name="Dowd L."/>
            <person name="White N."/>
            <person name="Farrar J."/>
            <person name="Feltwell T."/>
            <person name="Hamlin N."/>
            <person name="Haque A."/>
            <person name="Hien T.T."/>
            <person name="Holroyd S."/>
            <person name="Jagels K."/>
            <person name="Krogh A."/>
            <person name="Larsen T.S."/>
            <person name="Leather S."/>
            <person name="Moule S."/>
            <person name="O'Gaora P."/>
            <person name="Parry C."/>
            <person name="Quail M.A."/>
            <person name="Rutherford K.M."/>
            <person name="Simmonds M."/>
            <person name="Skelton J."/>
            <person name="Stevens K."/>
            <person name="Whitehead S."/>
            <person name="Barrell B.G."/>
        </authorList>
    </citation>
    <scope>NUCLEOTIDE SEQUENCE [LARGE SCALE GENOMIC DNA]</scope>
    <source>
        <strain>CT18</strain>
    </source>
</reference>
<reference key="2">
    <citation type="journal article" date="2003" name="J. Bacteriol.">
        <title>Comparative genomics of Salmonella enterica serovar Typhi strains Ty2 and CT18.</title>
        <authorList>
            <person name="Deng W."/>
            <person name="Liou S.-R."/>
            <person name="Plunkett G. III"/>
            <person name="Mayhew G.F."/>
            <person name="Rose D.J."/>
            <person name="Burland V."/>
            <person name="Kodoyianni V."/>
            <person name="Schwartz D.C."/>
            <person name="Blattner F.R."/>
        </authorList>
    </citation>
    <scope>NUCLEOTIDE SEQUENCE [LARGE SCALE GENOMIC DNA]</scope>
    <source>
        <strain>ATCC 700931 / Ty2</strain>
    </source>
</reference>
<sequence>MSVLQVLHIPDERLRKVAKPVEEVNAEIQRIVDDMFETMYAEEGIGLAATQVDIHQRIIVIDVSENRDERLVLINPELLEKSGETGIEEGCLSIPEQRALVPRAEKVKIRALDRNGNPFELEADGLLAICIQHEMDHLVGKLFIDYLSPLKQQRIRQKVEKLDRLNARA</sequence>